<keyword id="KW-0028">Amino-acid biosynthesis</keyword>
<keyword id="KW-0963">Cytoplasm</keyword>
<keyword id="KW-0554">One-carbon metabolism</keyword>
<keyword id="KW-0663">Pyridoxal phosphate</keyword>
<keyword id="KW-0808">Transferase</keyword>
<reference key="1">
    <citation type="journal article" date="2009" name="BMC Genomics">
        <title>Genome evolution driven by host adaptations results in a more virulent and antimicrobial-resistant Streptococcus pneumoniae serotype 14.</title>
        <authorList>
            <person name="Ding F."/>
            <person name="Tang P."/>
            <person name="Hsu M.-H."/>
            <person name="Cui P."/>
            <person name="Hu S."/>
            <person name="Yu J."/>
            <person name="Chiu C.-H."/>
        </authorList>
    </citation>
    <scope>NUCLEOTIDE SEQUENCE [LARGE SCALE GENOMIC DNA]</scope>
    <source>
        <strain>CGSP14</strain>
    </source>
</reference>
<gene>
    <name evidence="1" type="primary">glyA</name>
    <name type="ordered locus">SPCG_1002</name>
</gene>
<evidence type="ECO:0000255" key="1">
    <source>
        <dbReference type="HAMAP-Rule" id="MF_00051"/>
    </source>
</evidence>
<accession>B2IPI0</accession>
<name>GLYA_STRPS</name>
<protein>
    <recommendedName>
        <fullName evidence="1">Serine hydroxymethyltransferase</fullName>
        <shortName evidence="1">SHMT</shortName>
        <shortName evidence="1">Serine methylase</shortName>
        <ecNumber evidence="1">2.1.2.1</ecNumber>
    </recommendedName>
</protein>
<comment type="function">
    <text evidence="1">Catalyzes the reversible interconversion of serine and glycine with tetrahydrofolate (THF) serving as the one-carbon carrier. This reaction serves as the major source of one-carbon groups required for the biosynthesis of purines, thymidylate, methionine, and other important biomolecules. Also exhibits THF-independent aldolase activity toward beta-hydroxyamino acids, producing glycine and aldehydes, via a retro-aldol mechanism.</text>
</comment>
<comment type="catalytic activity">
    <reaction evidence="1">
        <text>(6R)-5,10-methylene-5,6,7,8-tetrahydrofolate + glycine + H2O = (6S)-5,6,7,8-tetrahydrofolate + L-serine</text>
        <dbReference type="Rhea" id="RHEA:15481"/>
        <dbReference type="ChEBI" id="CHEBI:15377"/>
        <dbReference type="ChEBI" id="CHEBI:15636"/>
        <dbReference type="ChEBI" id="CHEBI:33384"/>
        <dbReference type="ChEBI" id="CHEBI:57305"/>
        <dbReference type="ChEBI" id="CHEBI:57453"/>
        <dbReference type="EC" id="2.1.2.1"/>
    </reaction>
</comment>
<comment type="cofactor">
    <cofactor evidence="1">
        <name>pyridoxal 5'-phosphate</name>
        <dbReference type="ChEBI" id="CHEBI:597326"/>
    </cofactor>
</comment>
<comment type="pathway">
    <text evidence="1">One-carbon metabolism; tetrahydrofolate interconversion.</text>
</comment>
<comment type="pathway">
    <text evidence="1">Amino-acid biosynthesis; glycine biosynthesis; glycine from L-serine: step 1/1.</text>
</comment>
<comment type="subunit">
    <text evidence="1">Homodimer.</text>
</comment>
<comment type="subcellular location">
    <subcellularLocation>
        <location evidence="1">Cytoplasm</location>
    </subcellularLocation>
</comment>
<comment type="similarity">
    <text evidence="1">Belongs to the SHMT family.</text>
</comment>
<dbReference type="EC" id="2.1.2.1" evidence="1"/>
<dbReference type="EMBL" id="CP001033">
    <property type="protein sequence ID" value="ACB90254.1"/>
    <property type="molecule type" value="Genomic_DNA"/>
</dbReference>
<dbReference type="RefSeq" id="WP_000575519.1">
    <property type="nucleotide sequence ID" value="NC_010582.1"/>
</dbReference>
<dbReference type="SMR" id="B2IPI0"/>
<dbReference type="KEGG" id="spw:SPCG_1002"/>
<dbReference type="HOGENOM" id="CLU_022477_2_1_9"/>
<dbReference type="UniPathway" id="UPA00193"/>
<dbReference type="UniPathway" id="UPA00288">
    <property type="reaction ID" value="UER01023"/>
</dbReference>
<dbReference type="GO" id="GO:0005829">
    <property type="term" value="C:cytosol"/>
    <property type="evidence" value="ECO:0007669"/>
    <property type="project" value="TreeGrafter"/>
</dbReference>
<dbReference type="GO" id="GO:0004372">
    <property type="term" value="F:glycine hydroxymethyltransferase activity"/>
    <property type="evidence" value="ECO:0007669"/>
    <property type="project" value="UniProtKB-UniRule"/>
</dbReference>
<dbReference type="GO" id="GO:0030170">
    <property type="term" value="F:pyridoxal phosphate binding"/>
    <property type="evidence" value="ECO:0007669"/>
    <property type="project" value="UniProtKB-UniRule"/>
</dbReference>
<dbReference type="GO" id="GO:0019264">
    <property type="term" value="P:glycine biosynthetic process from serine"/>
    <property type="evidence" value="ECO:0007669"/>
    <property type="project" value="UniProtKB-UniRule"/>
</dbReference>
<dbReference type="GO" id="GO:0035999">
    <property type="term" value="P:tetrahydrofolate interconversion"/>
    <property type="evidence" value="ECO:0007669"/>
    <property type="project" value="UniProtKB-UniRule"/>
</dbReference>
<dbReference type="CDD" id="cd00378">
    <property type="entry name" value="SHMT"/>
    <property type="match status" value="1"/>
</dbReference>
<dbReference type="FunFam" id="3.40.640.10:FF:000001">
    <property type="entry name" value="Serine hydroxymethyltransferase"/>
    <property type="match status" value="1"/>
</dbReference>
<dbReference type="FunFam" id="3.90.1150.10:FF:000072">
    <property type="entry name" value="Serine hydroxymethyltransferase"/>
    <property type="match status" value="1"/>
</dbReference>
<dbReference type="Gene3D" id="3.90.1150.10">
    <property type="entry name" value="Aspartate Aminotransferase, domain 1"/>
    <property type="match status" value="1"/>
</dbReference>
<dbReference type="Gene3D" id="3.40.640.10">
    <property type="entry name" value="Type I PLP-dependent aspartate aminotransferase-like (Major domain)"/>
    <property type="match status" value="1"/>
</dbReference>
<dbReference type="HAMAP" id="MF_00051">
    <property type="entry name" value="SHMT"/>
    <property type="match status" value="1"/>
</dbReference>
<dbReference type="InterPro" id="IPR015424">
    <property type="entry name" value="PyrdxlP-dep_Trfase"/>
</dbReference>
<dbReference type="InterPro" id="IPR015421">
    <property type="entry name" value="PyrdxlP-dep_Trfase_major"/>
</dbReference>
<dbReference type="InterPro" id="IPR015422">
    <property type="entry name" value="PyrdxlP-dep_Trfase_small"/>
</dbReference>
<dbReference type="InterPro" id="IPR001085">
    <property type="entry name" value="Ser_HO-MeTrfase"/>
</dbReference>
<dbReference type="InterPro" id="IPR049943">
    <property type="entry name" value="Ser_HO-MeTrfase-like"/>
</dbReference>
<dbReference type="InterPro" id="IPR019798">
    <property type="entry name" value="Ser_HO-MeTrfase_PLP_BS"/>
</dbReference>
<dbReference type="InterPro" id="IPR039429">
    <property type="entry name" value="SHMT-like_dom"/>
</dbReference>
<dbReference type="NCBIfam" id="NF000586">
    <property type="entry name" value="PRK00011.1"/>
    <property type="match status" value="1"/>
</dbReference>
<dbReference type="PANTHER" id="PTHR11680">
    <property type="entry name" value="SERINE HYDROXYMETHYLTRANSFERASE"/>
    <property type="match status" value="1"/>
</dbReference>
<dbReference type="PANTHER" id="PTHR11680:SF35">
    <property type="entry name" value="SERINE HYDROXYMETHYLTRANSFERASE 1"/>
    <property type="match status" value="1"/>
</dbReference>
<dbReference type="Pfam" id="PF00464">
    <property type="entry name" value="SHMT"/>
    <property type="match status" value="1"/>
</dbReference>
<dbReference type="PIRSF" id="PIRSF000412">
    <property type="entry name" value="SHMT"/>
    <property type="match status" value="1"/>
</dbReference>
<dbReference type="SUPFAM" id="SSF53383">
    <property type="entry name" value="PLP-dependent transferases"/>
    <property type="match status" value="1"/>
</dbReference>
<dbReference type="PROSITE" id="PS00096">
    <property type="entry name" value="SHMT"/>
    <property type="match status" value="1"/>
</dbReference>
<organism>
    <name type="scientific">Streptococcus pneumoniae (strain CGSP14)</name>
    <dbReference type="NCBI Taxonomy" id="516950"/>
    <lineage>
        <taxon>Bacteria</taxon>
        <taxon>Bacillati</taxon>
        <taxon>Bacillota</taxon>
        <taxon>Bacilli</taxon>
        <taxon>Lactobacillales</taxon>
        <taxon>Streptococcaceae</taxon>
        <taxon>Streptococcus</taxon>
    </lineage>
</organism>
<sequence length="418" mass="45260">MIFDKDDFKAYDADLWNAIAKEEERQQNNIELIASENVVSKAVMAAQGSILTNKYAEGYPGRRYYGGTDVVDVVETLAIERAKEIFGAKFANVQPHSGSQANCAAYMSLIEPGDTVMGMDLASGGHLTHGAPVSFSGQTYNFVSYSVDPETELLDFDAILKQAQEVKPKLIVAGASAYSQIIDFSKFREIADAVGAKLMVDMAHIAGLVAAGLHPSPVPYAHITTTTTHKTLRGPRGGLILTNDEELAKKINSAIFPGIQGGPLEHVVAAKAVSFKEVLDPAFKEYAANVIKNSKAMADVFLQDPDFRIISGGTENHLFLVDVTKVVENGKVAQNLLDEVNITLNKNSIPYESLSPFKTSGIRIGAAAITARGFGEEESRKVAELIIKTLKNSENEAVLEEVRSAVKELTDAFLLYED</sequence>
<feature type="chain" id="PRO_1000091587" description="Serine hydroxymethyltransferase">
    <location>
        <begin position="1"/>
        <end position="418"/>
    </location>
</feature>
<feature type="binding site" evidence="1">
    <location>
        <position position="121"/>
    </location>
    <ligand>
        <name>(6S)-5,6,7,8-tetrahydrofolate</name>
        <dbReference type="ChEBI" id="CHEBI:57453"/>
    </ligand>
</feature>
<feature type="binding site" evidence="1">
    <location>
        <begin position="125"/>
        <end position="127"/>
    </location>
    <ligand>
        <name>(6S)-5,6,7,8-tetrahydrofolate</name>
        <dbReference type="ChEBI" id="CHEBI:57453"/>
    </ligand>
</feature>
<feature type="binding site" evidence="1">
    <location>
        <position position="246"/>
    </location>
    <ligand>
        <name>(6S)-5,6,7,8-tetrahydrofolate</name>
        <dbReference type="ChEBI" id="CHEBI:57453"/>
    </ligand>
</feature>
<feature type="binding site" evidence="1">
    <location>
        <begin position="355"/>
        <end position="357"/>
    </location>
    <ligand>
        <name>(6S)-5,6,7,8-tetrahydrofolate</name>
        <dbReference type="ChEBI" id="CHEBI:57453"/>
    </ligand>
</feature>
<feature type="site" description="Plays an important role in substrate specificity" evidence="1">
    <location>
        <position position="229"/>
    </location>
</feature>
<feature type="modified residue" description="N6-(pyridoxal phosphate)lysine" evidence="1">
    <location>
        <position position="230"/>
    </location>
</feature>
<proteinExistence type="inferred from homology"/>